<protein>
    <recommendedName>
        <fullName evidence="3">Small ribosomal subunit protein uS4c</fullName>
    </recommendedName>
    <alternativeName>
        <fullName>30S ribosomal protein S4, chloroplastic</fullName>
    </alternativeName>
</protein>
<geneLocation type="chloroplast"/>
<feature type="chain" id="PRO_0000228954" description="Small ribosomal subunit protein uS4c">
    <location>
        <begin position="1"/>
        <end position="205"/>
    </location>
</feature>
<feature type="domain" description="S4 RNA-binding">
    <location>
        <begin position="94"/>
        <end position="157"/>
    </location>
</feature>
<feature type="region of interest" description="Disordered" evidence="2">
    <location>
        <begin position="22"/>
        <end position="42"/>
    </location>
</feature>
<feature type="compositionally biased region" description="Polar residues" evidence="2">
    <location>
        <begin position="28"/>
        <end position="42"/>
    </location>
</feature>
<accession>Q3ZJ39</accession>
<organism>
    <name type="scientific">Tupiella akineta</name>
    <name type="common">Green alga</name>
    <name type="synonym">Pseudendoclonium akinetum</name>
    <dbReference type="NCBI Taxonomy" id="160070"/>
    <lineage>
        <taxon>Eukaryota</taxon>
        <taxon>Viridiplantae</taxon>
        <taxon>Chlorophyta</taxon>
        <taxon>Ulvophyceae</taxon>
        <taxon>OUU clade</taxon>
        <taxon>Ulotrichales</taxon>
        <taxon>Tupiellaceae</taxon>
        <taxon>Tupiella</taxon>
    </lineage>
</organism>
<gene>
    <name type="primary">rps4</name>
</gene>
<reference key="1">
    <citation type="journal article" date="2005" name="Mol. Biol. Evol.">
        <title>The chloroplast genome sequence of the green alga Pseudendoclonium akinetum (Ulvophyceae) reveals unusual structural features and new insights into the branching order of chlorophyte lineages.</title>
        <authorList>
            <person name="Pombert J.-F."/>
            <person name="Otis C."/>
            <person name="Lemieux C."/>
            <person name="Turmel M."/>
        </authorList>
    </citation>
    <scope>NUCLEOTIDE SEQUENCE [LARGE SCALE GENOMIC DNA]</scope>
    <source>
        <strain>UTEX 1912</strain>
    </source>
</reference>
<name>RR4_TUPAK</name>
<comment type="function">
    <text evidence="1">One of the primary rRNA binding proteins, it binds directly to 16S rRNA where it nucleates assembly of the body of the 30S subunit.</text>
</comment>
<comment type="function">
    <text evidence="1">With S5 and S12 plays an important role in translational accuracy.</text>
</comment>
<comment type="subunit">
    <text evidence="1">Part of the 30S ribosomal subunit. Contacts protein S5. The interaction surface between S4 and S5 is involved in control of translational fidelity (By similarity).</text>
</comment>
<comment type="subcellular location">
    <subcellularLocation>
        <location>Plastid</location>
        <location>Chloroplast</location>
    </subcellularLocation>
</comment>
<comment type="similarity">
    <text evidence="3">Belongs to the universal ribosomal protein uS4 family.</text>
</comment>
<keyword id="KW-0150">Chloroplast</keyword>
<keyword id="KW-0934">Plastid</keyword>
<keyword id="KW-0687">Ribonucleoprotein</keyword>
<keyword id="KW-0689">Ribosomal protein</keyword>
<keyword id="KW-0694">RNA-binding</keyword>
<keyword id="KW-0699">rRNA-binding</keyword>
<sequence length="205" mass="23393">MSKYRGPRLRLVRKLGKLPGLTSKISKKTNTPGEHGQPQNKLLKNRSPYGLRLLEKQKLRFNYNITERQLLRYVKQAKNLTGSTGEILLAILEMRLDNIVYRLGMAPTIVAARQLVSHGHILVNKQKVNIPSYPCQLKEVISVKDKKASRDLVKKFVQESAVNPVPSHLSFNKENLVGIVNNVATREWIGLQINELLVIEYYSRN</sequence>
<evidence type="ECO:0000250" key="1"/>
<evidence type="ECO:0000256" key="2">
    <source>
        <dbReference type="SAM" id="MobiDB-lite"/>
    </source>
</evidence>
<evidence type="ECO:0000305" key="3"/>
<proteinExistence type="inferred from homology"/>
<dbReference type="EMBL" id="AY835431">
    <property type="protein sequence ID" value="AAV80650.1"/>
    <property type="molecule type" value="Genomic_DNA"/>
</dbReference>
<dbReference type="RefSeq" id="YP_636228.1">
    <property type="nucleotide sequence ID" value="NC_008114.1"/>
</dbReference>
<dbReference type="SMR" id="Q3ZJ39"/>
<dbReference type="GeneID" id="4108724"/>
<dbReference type="GO" id="GO:0009507">
    <property type="term" value="C:chloroplast"/>
    <property type="evidence" value="ECO:0007669"/>
    <property type="project" value="UniProtKB-SubCell"/>
</dbReference>
<dbReference type="GO" id="GO:0015935">
    <property type="term" value="C:small ribosomal subunit"/>
    <property type="evidence" value="ECO:0007669"/>
    <property type="project" value="InterPro"/>
</dbReference>
<dbReference type="GO" id="GO:0019843">
    <property type="term" value="F:rRNA binding"/>
    <property type="evidence" value="ECO:0007669"/>
    <property type="project" value="UniProtKB-UniRule"/>
</dbReference>
<dbReference type="GO" id="GO:0003735">
    <property type="term" value="F:structural constituent of ribosome"/>
    <property type="evidence" value="ECO:0007669"/>
    <property type="project" value="InterPro"/>
</dbReference>
<dbReference type="GO" id="GO:0042274">
    <property type="term" value="P:ribosomal small subunit biogenesis"/>
    <property type="evidence" value="ECO:0007669"/>
    <property type="project" value="TreeGrafter"/>
</dbReference>
<dbReference type="GO" id="GO:0006412">
    <property type="term" value="P:translation"/>
    <property type="evidence" value="ECO:0007669"/>
    <property type="project" value="UniProtKB-UniRule"/>
</dbReference>
<dbReference type="CDD" id="cd00165">
    <property type="entry name" value="S4"/>
    <property type="match status" value="1"/>
</dbReference>
<dbReference type="FunFam" id="3.10.290.10:FF:000001">
    <property type="entry name" value="30S ribosomal protein S4"/>
    <property type="match status" value="1"/>
</dbReference>
<dbReference type="FunFam" id="1.10.1050.10:FF:000002">
    <property type="entry name" value="30S ribosomal protein S4, chloroplastic"/>
    <property type="match status" value="1"/>
</dbReference>
<dbReference type="Gene3D" id="1.10.1050.10">
    <property type="entry name" value="Ribosomal Protein S4 Delta 41, Chain A, domain 1"/>
    <property type="match status" value="1"/>
</dbReference>
<dbReference type="Gene3D" id="3.10.290.10">
    <property type="entry name" value="RNA-binding S4 domain"/>
    <property type="match status" value="1"/>
</dbReference>
<dbReference type="HAMAP" id="MF_01306_B">
    <property type="entry name" value="Ribosomal_uS4_B"/>
    <property type="match status" value="1"/>
</dbReference>
<dbReference type="InterPro" id="IPR022801">
    <property type="entry name" value="Ribosomal_uS4"/>
</dbReference>
<dbReference type="InterPro" id="IPR005709">
    <property type="entry name" value="Ribosomal_uS4_bac-type"/>
</dbReference>
<dbReference type="InterPro" id="IPR018079">
    <property type="entry name" value="Ribosomal_uS4_CS"/>
</dbReference>
<dbReference type="InterPro" id="IPR001912">
    <property type="entry name" value="Ribosomal_uS4_N"/>
</dbReference>
<dbReference type="InterPro" id="IPR002942">
    <property type="entry name" value="S4_RNA-bd"/>
</dbReference>
<dbReference type="InterPro" id="IPR036986">
    <property type="entry name" value="S4_RNA-bd_sf"/>
</dbReference>
<dbReference type="NCBIfam" id="NF003717">
    <property type="entry name" value="PRK05327.1"/>
    <property type="match status" value="1"/>
</dbReference>
<dbReference type="NCBIfam" id="TIGR01017">
    <property type="entry name" value="rpsD_bact"/>
    <property type="match status" value="1"/>
</dbReference>
<dbReference type="PANTHER" id="PTHR11831">
    <property type="entry name" value="30S 40S RIBOSOMAL PROTEIN"/>
    <property type="match status" value="1"/>
</dbReference>
<dbReference type="PANTHER" id="PTHR11831:SF4">
    <property type="entry name" value="SMALL RIBOSOMAL SUBUNIT PROTEIN US4M"/>
    <property type="match status" value="1"/>
</dbReference>
<dbReference type="Pfam" id="PF00163">
    <property type="entry name" value="Ribosomal_S4"/>
    <property type="match status" value="1"/>
</dbReference>
<dbReference type="Pfam" id="PF01479">
    <property type="entry name" value="S4"/>
    <property type="match status" value="1"/>
</dbReference>
<dbReference type="SMART" id="SM01390">
    <property type="entry name" value="Ribosomal_S4"/>
    <property type="match status" value="1"/>
</dbReference>
<dbReference type="SMART" id="SM00363">
    <property type="entry name" value="S4"/>
    <property type="match status" value="1"/>
</dbReference>
<dbReference type="SUPFAM" id="SSF55174">
    <property type="entry name" value="Alpha-L RNA-binding motif"/>
    <property type="match status" value="1"/>
</dbReference>
<dbReference type="PROSITE" id="PS00632">
    <property type="entry name" value="RIBOSOMAL_S4"/>
    <property type="match status" value="1"/>
</dbReference>
<dbReference type="PROSITE" id="PS50889">
    <property type="entry name" value="S4"/>
    <property type="match status" value="1"/>
</dbReference>